<gene>
    <name type="primary">Tmem89</name>
</gene>
<dbReference type="EMBL" id="AK006292">
    <property type="protein sequence ID" value="BAB24511.1"/>
    <property type="status" value="ALT_FRAME"/>
    <property type="molecule type" value="mRNA"/>
</dbReference>
<dbReference type="EMBL" id="BC111913">
    <property type="protein sequence ID" value="AAI11914.1"/>
    <property type="molecule type" value="mRNA"/>
</dbReference>
<dbReference type="CCDS" id="CCDS52928.1">
    <molecule id="Q9DA04-1"/>
</dbReference>
<dbReference type="RefSeq" id="NP_081342.1">
    <molecule id="Q9DA04-1"/>
    <property type="nucleotide sequence ID" value="NM_027066.1"/>
</dbReference>
<dbReference type="iPTMnet" id="Q9DA04"/>
<dbReference type="PhosphoSitePlus" id="Q9DA04"/>
<dbReference type="PaxDb" id="10090-ENSMUSP00000026744"/>
<dbReference type="ProteomicsDB" id="259136">
    <molecule id="Q9DA04-1"/>
</dbReference>
<dbReference type="ProteomicsDB" id="259137">
    <molecule id="Q9DA04-2"/>
</dbReference>
<dbReference type="Antibodypedia" id="66345">
    <property type="antibodies" value="6 antibodies from 6 providers"/>
</dbReference>
<dbReference type="Ensembl" id="ENSMUST00000026744.6">
    <molecule id="Q9DA04-1"/>
    <property type="protein sequence ID" value="ENSMUSP00000026744.6"/>
    <property type="gene ID" value="ENSMUSG00000025652.7"/>
</dbReference>
<dbReference type="Ensembl" id="ENSMUST00000192852.2">
    <molecule id="Q9DA04-2"/>
    <property type="protein sequence ID" value="ENSMUSP00000142016.2"/>
    <property type="gene ID" value="ENSMUSG00000025652.7"/>
</dbReference>
<dbReference type="GeneID" id="69384"/>
<dbReference type="KEGG" id="mmu:69384"/>
<dbReference type="UCSC" id="uc009rrf.1">
    <molecule id="Q9DA04-1"/>
    <property type="organism name" value="mouse"/>
</dbReference>
<dbReference type="AGR" id="MGI:1916634"/>
<dbReference type="CTD" id="440955"/>
<dbReference type="MGI" id="MGI:1916634">
    <property type="gene designation" value="Tmem89"/>
</dbReference>
<dbReference type="VEuPathDB" id="HostDB:ENSMUSG00000025652"/>
<dbReference type="eggNOG" id="ENOG502TDUC">
    <property type="taxonomic scope" value="Eukaryota"/>
</dbReference>
<dbReference type="GeneTree" id="ENSGT00390000005336"/>
<dbReference type="HOGENOM" id="CLU_1859782_0_0_1"/>
<dbReference type="InParanoid" id="Q9DA04"/>
<dbReference type="OMA" id="CPGHWMG"/>
<dbReference type="OrthoDB" id="9833607at2759"/>
<dbReference type="PhylomeDB" id="Q9DA04"/>
<dbReference type="TreeFam" id="TF336927"/>
<dbReference type="BioGRID-ORCS" id="69384">
    <property type="hits" value="1 hit in 76 CRISPR screens"/>
</dbReference>
<dbReference type="PRO" id="PR:Q9DA04"/>
<dbReference type="Proteomes" id="UP000000589">
    <property type="component" value="Chromosome 9"/>
</dbReference>
<dbReference type="RNAct" id="Q9DA04">
    <property type="molecule type" value="protein"/>
</dbReference>
<dbReference type="Bgee" id="ENSMUSG00000025652">
    <property type="expression patterns" value="Expressed in spermatid and 17 other cell types or tissues"/>
</dbReference>
<dbReference type="GO" id="GO:0016020">
    <property type="term" value="C:membrane"/>
    <property type="evidence" value="ECO:0007669"/>
    <property type="project" value="UniProtKB-SubCell"/>
</dbReference>
<dbReference type="InterPro" id="IPR028069">
    <property type="entry name" value="TMEM89"/>
</dbReference>
<dbReference type="PANTHER" id="PTHR37869">
    <property type="entry name" value="TRANSMEMBRANE PROTEIN 89"/>
    <property type="match status" value="1"/>
</dbReference>
<dbReference type="PANTHER" id="PTHR37869:SF1">
    <property type="entry name" value="TRANSMEMBRANE PROTEIN 89"/>
    <property type="match status" value="1"/>
</dbReference>
<dbReference type="Pfam" id="PF15098">
    <property type="entry name" value="TMEM89"/>
    <property type="match status" value="2"/>
</dbReference>
<sequence>MLYTLLLVPSLFLLVMPVPSQGWSRPLWYQVGLDLQPWGCQPNSPDIWGCQPNSLDSCKNSLGCPGYWLGLGGNRIYPVAGVTITTTMLLVVSRVIVHRWRAKVAKGQLPAVTSSSGKHWKEQPTVSDRTLVLRVLHMLDAILLHIEGHLQGLASQQQIQIKGSPPQSG</sequence>
<accession>Q9DA04</accession>
<accession>Q2M2L9</accession>
<protein>
    <recommendedName>
        <fullName>Transmembrane protein 89</fullName>
    </recommendedName>
</protein>
<keyword id="KW-0025">Alternative splicing</keyword>
<keyword id="KW-0472">Membrane</keyword>
<keyword id="KW-1185">Reference proteome</keyword>
<keyword id="KW-0732">Signal</keyword>
<keyword id="KW-0812">Transmembrane</keyword>
<keyword id="KW-1133">Transmembrane helix</keyword>
<name>TMM89_MOUSE</name>
<comment type="subcellular location">
    <subcellularLocation>
        <location evidence="3">Membrane</location>
        <topology evidence="3">Single-pass type I membrane protein</topology>
    </subcellularLocation>
</comment>
<comment type="alternative products">
    <event type="alternative splicing"/>
    <isoform>
        <id>Q9DA04-1</id>
        <name>1</name>
        <sequence type="displayed"/>
    </isoform>
    <isoform>
        <id>Q9DA04-2</id>
        <name>2</name>
        <sequence type="described" ref="VSP_026116 VSP_026117"/>
    </isoform>
</comment>
<comment type="sequence caution" evidence="3">
    <conflict type="frameshift">
        <sequence resource="EMBL-CDS" id="BAB24511"/>
    </conflict>
</comment>
<organism>
    <name type="scientific">Mus musculus</name>
    <name type="common">Mouse</name>
    <dbReference type="NCBI Taxonomy" id="10090"/>
    <lineage>
        <taxon>Eukaryota</taxon>
        <taxon>Metazoa</taxon>
        <taxon>Chordata</taxon>
        <taxon>Craniata</taxon>
        <taxon>Vertebrata</taxon>
        <taxon>Euteleostomi</taxon>
        <taxon>Mammalia</taxon>
        <taxon>Eutheria</taxon>
        <taxon>Euarchontoglires</taxon>
        <taxon>Glires</taxon>
        <taxon>Rodentia</taxon>
        <taxon>Myomorpha</taxon>
        <taxon>Muroidea</taxon>
        <taxon>Muridae</taxon>
        <taxon>Murinae</taxon>
        <taxon>Mus</taxon>
        <taxon>Mus</taxon>
    </lineage>
</organism>
<proteinExistence type="evidence at transcript level"/>
<reference key="1">
    <citation type="journal article" date="2005" name="Science">
        <title>The transcriptional landscape of the mammalian genome.</title>
        <authorList>
            <person name="Carninci P."/>
            <person name="Kasukawa T."/>
            <person name="Katayama S."/>
            <person name="Gough J."/>
            <person name="Frith M.C."/>
            <person name="Maeda N."/>
            <person name="Oyama R."/>
            <person name="Ravasi T."/>
            <person name="Lenhard B."/>
            <person name="Wells C."/>
            <person name="Kodzius R."/>
            <person name="Shimokawa K."/>
            <person name="Bajic V.B."/>
            <person name="Brenner S.E."/>
            <person name="Batalov S."/>
            <person name="Forrest A.R."/>
            <person name="Zavolan M."/>
            <person name="Davis M.J."/>
            <person name="Wilming L.G."/>
            <person name="Aidinis V."/>
            <person name="Allen J.E."/>
            <person name="Ambesi-Impiombato A."/>
            <person name="Apweiler R."/>
            <person name="Aturaliya R.N."/>
            <person name="Bailey T.L."/>
            <person name="Bansal M."/>
            <person name="Baxter L."/>
            <person name="Beisel K.W."/>
            <person name="Bersano T."/>
            <person name="Bono H."/>
            <person name="Chalk A.M."/>
            <person name="Chiu K.P."/>
            <person name="Choudhary V."/>
            <person name="Christoffels A."/>
            <person name="Clutterbuck D.R."/>
            <person name="Crowe M.L."/>
            <person name="Dalla E."/>
            <person name="Dalrymple B.P."/>
            <person name="de Bono B."/>
            <person name="Della Gatta G."/>
            <person name="di Bernardo D."/>
            <person name="Down T."/>
            <person name="Engstrom P."/>
            <person name="Fagiolini M."/>
            <person name="Faulkner G."/>
            <person name="Fletcher C.F."/>
            <person name="Fukushima T."/>
            <person name="Furuno M."/>
            <person name="Futaki S."/>
            <person name="Gariboldi M."/>
            <person name="Georgii-Hemming P."/>
            <person name="Gingeras T.R."/>
            <person name="Gojobori T."/>
            <person name="Green R.E."/>
            <person name="Gustincich S."/>
            <person name="Harbers M."/>
            <person name="Hayashi Y."/>
            <person name="Hensch T.K."/>
            <person name="Hirokawa N."/>
            <person name="Hill D."/>
            <person name="Huminiecki L."/>
            <person name="Iacono M."/>
            <person name="Ikeo K."/>
            <person name="Iwama A."/>
            <person name="Ishikawa T."/>
            <person name="Jakt M."/>
            <person name="Kanapin A."/>
            <person name="Katoh M."/>
            <person name="Kawasawa Y."/>
            <person name="Kelso J."/>
            <person name="Kitamura H."/>
            <person name="Kitano H."/>
            <person name="Kollias G."/>
            <person name="Krishnan S.P."/>
            <person name="Kruger A."/>
            <person name="Kummerfeld S.K."/>
            <person name="Kurochkin I.V."/>
            <person name="Lareau L.F."/>
            <person name="Lazarevic D."/>
            <person name="Lipovich L."/>
            <person name="Liu J."/>
            <person name="Liuni S."/>
            <person name="McWilliam S."/>
            <person name="Madan Babu M."/>
            <person name="Madera M."/>
            <person name="Marchionni L."/>
            <person name="Matsuda H."/>
            <person name="Matsuzawa S."/>
            <person name="Miki H."/>
            <person name="Mignone F."/>
            <person name="Miyake S."/>
            <person name="Morris K."/>
            <person name="Mottagui-Tabar S."/>
            <person name="Mulder N."/>
            <person name="Nakano N."/>
            <person name="Nakauchi H."/>
            <person name="Ng P."/>
            <person name="Nilsson R."/>
            <person name="Nishiguchi S."/>
            <person name="Nishikawa S."/>
            <person name="Nori F."/>
            <person name="Ohara O."/>
            <person name="Okazaki Y."/>
            <person name="Orlando V."/>
            <person name="Pang K.C."/>
            <person name="Pavan W.J."/>
            <person name="Pavesi G."/>
            <person name="Pesole G."/>
            <person name="Petrovsky N."/>
            <person name="Piazza S."/>
            <person name="Reed J."/>
            <person name="Reid J.F."/>
            <person name="Ring B.Z."/>
            <person name="Ringwald M."/>
            <person name="Rost B."/>
            <person name="Ruan Y."/>
            <person name="Salzberg S.L."/>
            <person name="Sandelin A."/>
            <person name="Schneider C."/>
            <person name="Schoenbach C."/>
            <person name="Sekiguchi K."/>
            <person name="Semple C.A."/>
            <person name="Seno S."/>
            <person name="Sessa L."/>
            <person name="Sheng Y."/>
            <person name="Shibata Y."/>
            <person name="Shimada H."/>
            <person name="Shimada K."/>
            <person name="Silva D."/>
            <person name="Sinclair B."/>
            <person name="Sperling S."/>
            <person name="Stupka E."/>
            <person name="Sugiura K."/>
            <person name="Sultana R."/>
            <person name="Takenaka Y."/>
            <person name="Taki K."/>
            <person name="Tammoja K."/>
            <person name="Tan S.L."/>
            <person name="Tang S."/>
            <person name="Taylor M.S."/>
            <person name="Tegner J."/>
            <person name="Teichmann S.A."/>
            <person name="Ueda H.R."/>
            <person name="van Nimwegen E."/>
            <person name="Verardo R."/>
            <person name="Wei C.L."/>
            <person name="Yagi K."/>
            <person name="Yamanishi H."/>
            <person name="Zabarovsky E."/>
            <person name="Zhu S."/>
            <person name="Zimmer A."/>
            <person name="Hide W."/>
            <person name="Bult C."/>
            <person name="Grimmond S.M."/>
            <person name="Teasdale R.D."/>
            <person name="Liu E.T."/>
            <person name="Brusic V."/>
            <person name="Quackenbush J."/>
            <person name="Wahlestedt C."/>
            <person name="Mattick J.S."/>
            <person name="Hume D.A."/>
            <person name="Kai C."/>
            <person name="Sasaki D."/>
            <person name="Tomaru Y."/>
            <person name="Fukuda S."/>
            <person name="Kanamori-Katayama M."/>
            <person name="Suzuki M."/>
            <person name="Aoki J."/>
            <person name="Arakawa T."/>
            <person name="Iida J."/>
            <person name="Imamura K."/>
            <person name="Itoh M."/>
            <person name="Kato T."/>
            <person name="Kawaji H."/>
            <person name="Kawagashira N."/>
            <person name="Kawashima T."/>
            <person name="Kojima M."/>
            <person name="Kondo S."/>
            <person name="Konno H."/>
            <person name="Nakano K."/>
            <person name="Ninomiya N."/>
            <person name="Nishio T."/>
            <person name="Okada M."/>
            <person name="Plessy C."/>
            <person name="Shibata K."/>
            <person name="Shiraki T."/>
            <person name="Suzuki S."/>
            <person name="Tagami M."/>
            <person name="Waki K."/>
            <person name="Watahiki A."/>
            <person name="Okamura-Oho Y."/>
            <person name="Suzuki H."/>
            <person name="Kawai J."/>
            <person name="Hayashizaki Y."/>
        </authorList>
    </citation>
    <scope>NUCLEOTIDE SEQUENCE [LARGE SCALE MRNA] (ISOFORM 1)</scope>
    <source>
        <strain>C57BL/6J</strain>
        <tissue>Testis</tissue>
    </source>
</reference>
<reference key="2">
    <citation type="journal article" date="2004" name="Genome Res.">
        <title>The status, quality, and expansion of the NIH full-length cDNA project: the Mammalian Gene Collection (MGC).</title>
        <authorList>
            <consortium name="The MGC Project Team"/>
        </authorList>
    </citation>
    <scope>NUCLEOTIDE SEQUENCE [LARGE SCALE MRNA] (ISOFORM 2)</scope>
</reference>
<feature type="signal peptide" evidence="1">
    <location>
        <begin position="1"/>
        <end position="22"/>
    </location>
</feature>
<feature type="chain" id="PRO_0000290068" description="Transmembrane protein 89">
    <location>
        <begin position="23"/>
        <end position="169"/>
    </location>
</feature>
<feature type="topological domain" description="Extracellular" evidence="1">
    <location>
        <begin position="23"/>
        <end position="75"/>
    </location>
</feature>
<feature type="transmembrane region" description="Helical" evidence="1">
    <location>
        <begin position="76"/>
        <end position="96"/>
    </location>
</feature>
<feature type="topological domain" description="Cytoplasmic" evidence="1">
    <location>
        <begin position="97"/>
        <end position="169"/>
    </location>
</feature>
<feature type="splice variant" id="VSP_026116" description="In isoform 2." evidence="2">
    <original>LPAVTSSSGKHWKEQPTVSDRTLVLRVLHMLD</original>
    <variation>VSTAPLCPLQFLLLLMPPGPCLPLNLLPITLA</variation>
    <location>
        <begin position="109"/>
        <end position="140"/>
    </location>
</feature>
<feature type="splice variant" id="VSP_026117" description="In isoform 2." evidence="2">
    <location>
        <begin position="141"/>
        <end position="169"/>
    </location>
</feature>
<evidence type="ECO:0000255" key="1"/>
<evidence type="ECO:0000303" key="2">
    <source>
    </source>
</evidence>
<evidence type="ECO:0000305" key="3"/>